<proteinExistence type="inferred from homology"/>
<name>MTAP_CIOIN</name>
<dbReference type="EC" id="2.4.2.28" evidence="1"/>
<dbReference type="RefSeq" id="XP_002131665.1">
    <property type="nucleotide sequence ID" value="XM_002131629.4"/>
</dbReference>
<dbReference type="RefSeq" id="XP_018667802.1">
    <property type="nucleotide sequence ID" value="XM_018812257.1"/>
</dbReference>
<dbReference type="SMR" id="F6X2V8"/>
<dbReference type="FunCoup" id="F6X2V8">
    <property type="interactions" value="136"/>
</dbReference>
<dbReference type="STRING" id="7719.ENSCINP00000005182"/>
<dbReference type="eggNOG" id="KOG3985">
    <property type="taxonomic scope" value="Eukaryota"/>
</dbReference>
<dbReference type="InParanoid" id="F6X2V8"/>
<dbReference type="UniPathway" id="UPA00904">
    <property type="reaction ID" value="UER00873"/>
</dbReference>
<dbReference type="Proteomes" id="UP000008144">
    <property type="component" value="Unplaced"/>
</dbReference>
<dbReference type="GO" id="GO:0005829">
    <property type="term" value="C:cytosol"/>
    <property type="evidence" value="ECO:0000318"/>
    <property type="project" value="GO_Central"/>
</dbReference>
<dbReference type="GO" id="GO:0005634">
    <property type="term" value="C:nucleus"/>
    <property type="evidence" value="ECO:0007669"/>
    <property type="project" value="UniProtKB-SubCell"/>
</dbReference>
<dbReference type="GO" id="GO:0017061">
    <property type="term" value="F:S-methyl-5-thioadenosine phosphorylase activity"/>
    <property type="evidence" value="ECO:0000318"/>
    <property type="project" value="GO_Central"/>
</dbReference>
<dbReference type="GO" id="GO:0019509">
    <property type="term" value="P:L-methionine salvage from methylthioadenosine"/>
    <property type="evidence" value="ECO:0000318"/>
    <property type="project" value="GO_Central"/>
</dbReference>
<dbReference type="GO" id="GO:0006166">
    <property type="term" value="P:purine ribonucleoside salvage"/>
    <property type="evidence" value="ECO:0007669"/>
    <property type="project" value="UniProtKB-KW"/>
</dbReference>
<dbReference type="CDD" id="cd09010">
    <property type="entry name" value="MTAP_SsMTAPII_like_MTIP"/>
    <property type="match status" value="1"/>
</dbReference>
<dbReference type="FunFam" id="3.40.50.1580:FF:000012">
    <property type="entry name" value="Probable 6-oxopurine nucleoside phosphorylase"/>
    <property type="match status" value="1"/>
</dbReference>
<dbReference type="Gene3D" id="3.40.50.1580">
    <property type="entry name" value="Nucleoside phosphorylase domain"/>
    <property type="match status" value="1"/>
</dbReference>
<dbReference type="HAMAP" id="MF_01963">
    <property type="entry name" value="MTAP"/>
    <property type="match status" value="1"/>
</dbReference>
<dbReference type="InterPro" id="IPR010044">
    <property type="entry name" value="MTAP"/>
</dbReference>
<dbReference type="InterPro" id="IPR000845">
    <property type="entry name" value="Nucleoside_phosphorylase_d"/>
</dbReference>
<dbReference type="InterPro" id="IPR035994">
    <property type="entry name" value="Nucleoside_phosphorylase_sf"/>
</dbReference>
<dbReference type="InterPro" id="IPR018099">
    <property type="entry name" value="Purine_phosphorylase-2_CS"/>
</dbReference>
<dbReference type="NCBIfam" id="TIGR01694">
    <property type="entry name" value="MTAP"/>
    <property type="match status" value="1"/>
</dbReference>
<dbReference type="PANTHER" id="PTHR42679">
    <property type="entry name" value="S-METHYL-5'-THIOADENOSINE PHOSPHORYLASE"/>
    <property type="match status" value="1"/>
</dbReference>
<dbReference type="PANTHER" id="PTHR42679:SF2">
    <property type="entry name" value="S-METHYL-5'-THIOADENOSINE PHOSPHORYLASE"/>
    <property type="match status" value="1"/>
</dbReference>
<dbReference type="Pfam" id="PF01048">
    <property type="entry name" value="PNP_UDP_1"/>
    <property type="match status" value="1"/>
</dbReference>
<dbReference type="SUPFAM" id="SSF53167">
    <property type="entry name" value="Purine and uridine phosphorylases"/>
    <property type="match status" value="1"/>
</dbReference>
<dbReference type="PROSITE" id="PS01240">
    <property type="entry name" value="PNP_MTAP_2"/>
    <property type="match status" value="1"/>
</dbReference>
<evidence type="ECO:0000255" key="1">
    <source>
        <dbReference type="HAMAP-Rule" id="MF_03155"/>
    </source>
</evidence>
<reference key="1">
    <citation type="journal article" date="2002" name="Science">
        <title>The draft genome of Ciona intestinalis: insights into chordate and vertebrate origins.</title>
        <authorList>
            <person name="Dehal P."/>
            <person name="Satou Y."/>
            <person name="Campbell R.K."/>
            <person name="Chapman J."/>
            <person name="Degnan B."/>
            <person name="De Tomaso A."/>
            <person name="Davidson B."/>
            <person name="Di Gregorio A."/>
            <person name="Gelpke M."/>
            <person name="Goodstein D.M."/>
            <person name="Harafuji N."/>
            <person name="Hastings K.E."/>
            <person name="Ho I."/>
            <person name="Hotta K."/>
            <person name="Huang W."/>
            <person name="Kawashima T."/>
            <person name="Lemaire P."/>
            <person name="Martinez D."/>
            <person name="Meinertzhagen I.A."/>
            <person name="Necula S."/>
            <person name="Nonaka M."/>
            <person name="Putnam N."/>
            <person name="Rash S."/>
            <person name="Saiga H."/>
            <person name="Satake M."/>
            <person name="Terry A."/>
            <person name="Yamada L."/>
            <person name="Wang H.G."/>
            <person name="Awazu S."/>
            <person name="Azumi K."/>
            <person name="Boore J."/>
            <person name="Branno M."/>
            <person name="Chin-Bow S."/>
            <person name="DeSantis R."/>
            <person name="Doyle S."/>
            <person name="Francino P."/>
            <person name="Keys D.N."/>
            <person name="Haga S."/>
            <person name="Hayashi H."/>
            <person name="Hino K."/>
            <person name="Imai K.S."/>
            <person name="Inaba K."/>
            <person name="Kano S."/>
            <person name="Kobayashi K."/>
            <person name="Kobayashi M."/>
            <person name="Lee B.I."/>
            <person name="Makabe K.W."/>
            <person name="Manohar C."/>
            <person name="Matassi G."/>
            <person name="Medina M."/>
            <person name="Mochizuki Y."/>
            <person name="Mount S."/>
            <person name="Morishita T."/>
            <person name="Miura S."/>
            <person name="Nakayama A."/>
            <person name="Nishizaka S."/>
            <person name="Nomoto H."/>
            <person name="Ohta F."/>
            <person name="Oishi K."/>
            <person name="Rigoutsos I."/>
            <person name="Sano M."/>
            <person name="Sasaki A."/>
            <person name="Sasakura Y."/>
            <person name="Shoguchi E."/>
            <person name="Shin-i T."/>
            <person name="Spagnuolo A."/>
            <person name="Stainier D."/>
            <person name="Suzuki M.M."/>
            <person name="Tassy O."/>
            <person name="Takatori N."/>
            <person name="Tokuoka M."/>
            <person name="Yagi K."/>
            <person name="Yoshizaki F."/>
            <person name="Wada S."/>
            <person name="Zhang C."/>
            <person name="Hyatt P.D."/>
            <person name="Larimer F."/>
            <person name="Detter C."/>
            <person name="Doggett N."/>
            <person name="Glavina T."/>
            <person name="Hawkins T."/>
            <person name="Richardson P."/>
            <person name="Lucas S."/>
            <person name="Kohara Y."/>
            <person name="Levine M."/>
            <person name="Satoh N."/>
            <person name="Rokhsar D.S."/>
        </authorList>
    </citation>
    <scope>NUCLEOTIDE SEQUENCE [LARGE SCALE GENOMIC DNA]</scope>
</reference>
<sequence>MMESGDRQNNKIGIIGGSGLESIELFTVKDKVNCNTPYGKPSSSLINGTLNGIECVLLSRHGDSHDIMPTDVNYRANLYALKEAGCSIILATTACGSLQEELKPTDFVVIDQFIDRTTKRHSTFYDGQNVQMKGVCHIPMRNPFCEKLQNVLLSACNVNNVSCHSKGTMVTIEGPRFSTYAESNLFRKWGGSLINMTTVPEVVLANELGMLYAALAMVTDYDCWKEDHASVNVENVMKTMKVNRGNALKVLVSAVEIISKQNLQPDIQLAEKNAKNSVML</sequence>
<comment type="function">
    <text evidence="1">Catalyzes the reversible phosphorylation of S-methyl-5'-thioadenosine (MTA) to adenine and 5-methylthioribose-1-phosphate. Involved in the breakdown of MTA, a major by-product of polyamine biosynthesis. Responsible for the first step in the methionine salvage pathway after MTA has been generated from S-adenosylmethionine. Has broad substrate specificity with 6-aminopurine nucleosides as preferred substrates.</text>
</comment>
<comment type="catalytic activity">
    <reaction evidence="1">
        <text>S-methyl-5'-thioadenosine + phosphate = 5-(methylsulfanyl)-alpha-D-ribose 1-phosphate + adenine</text>
        <dbReference type="Rhea" id="RHEA:11852"/>
        <dbReference type="ChEBI" id="CHEBI:16708"/>
        <dbReference type="ChEBI" id="CHEBI:17509"/>
        <dbReference type="ChEBI" id="CHEBI:43474"/>
        <dbReference type="ChEBI" id="CHEBI:58533"/>
        <dbReference type="EC" id="2.4.2.28"/>
    </reaction>
</comment>
<comment type="pathway">
    <text evidence="1">Amino-acid biosynthesis; L-methionine biosynthesis via salvage pathway; S-methyl-5-thio-alpha-D-ribose 1-phosphate from S-methyl-5'-thioadenosine (phosphorylase route): step 1/1.</text>
</comment>
<comment type="subunit">
    <text evidence="1">Homotrimer.</text>
</comment>
<comment type="subcellular location">
    <subcellularLocation>
        <location evidence="1">Cytoplasm</location>
    </subcellularLocation>
    <subcellularLocation>
        <location evidence="1">Nucleus</location>
    </subcellularLocation>
</comment>
<comment type="similarity">
    <text evidence="1">Belongs to the PNP/MTAP phosphorylase family. MTAP subfamily.</text>
</comment>
<keyword id="KW-0963">Cytoplasm</keyword>
<keyword id="KW-0328">Glycosyltransferase</keyword>
<keyword id="KW-0539">Nucleus</keyword>
<keyword id="KW-0660">Purine salvage</keyword>
<keyword id="KW-1185">Reference proteome</keyword>
<keyword id="KW-0808">Transferase</keyword>
<feature type="chain" id="PRO_0000415116" description="S-methyl-5'-thioadenosine phosphorylase">
    <location>
        <begin position="1"/>
        <end position="280"/>
    </location>
</feature>
<feature type="binding site" evidence="1">
    <location>
        <position position="18"/>
    </location>
    <ligand>
        <name>phosphate</name>
        <dbReference type="ChEBI" id="CHEBI:43474"/>
    </ligand>
</feature>
<feature type="binding site" evidence="1">
    <location>
        <begin position="60"/>
        <end position="61"/>
    </location>
    <ligand>
        <name>phosphate</name>
        <dbReference type="ChEBI" id="CHEBI:43474"/>
    </ligand>
</feature>
<feature type="binding site" evidence="1">
    <location>
        <begin position="93"/>
        <end position="94"/>
    </location>
    <ligand>
        <name>phosphate</name>
        <dbReference type="ChEBI" id="CHEBI:43474"/>
    </ligand>
</feature>
<feature type="binding site" evidence="1">
    <location>
        <position position="196"/>
    </location>
    <ligand>
        <name>substrate</name>
    </ligand>
</feature>
<feature type="binding site" evidence="1">
    <location>
        <position position="197"/>
    </location>
    <ligand>
        <name>phosphate</name>
        <dbReference type="ChEBI" id="CHEBI:43474"/>
    </ligand>
</feature>
<feature type="binding site" evidence="1">
    <location>
        <begin position="220"/>
        <end position="222"/>
    </location>
    <ligand>
        <name>substrate</name>
    </ligand>
</feature>
<feature type="site" description="Important for substrate specificity" evidence="1">
    <location>
        <position position="178"/>
    </location>
</feature>
<feature type="site" description="Important for substrate specificity" evidence="1">
    <location>
        <position position="233"/>
    </location>
</feature>
<accession>F6X2V8</accession>
<protein>
    <recommendedName>
        <fullName evidence="1">S-methyl-5'-thioadenosine phosphorylase</fullName>
        <ecNumber evidence="1">2.4.2.28</ecNumber>
    </recommendedName>
    <alternativeName>
        <fullName evidence="1">5'-methylthioadenosine phosphorylase</fullName>
        <shortName evidence="1">MTA phosphorylase</shortName>
        <shortName evidence="1">MTAP</shortName>
        <shortName evidence="1">MTAPase</shortName>
    </alternativeName>
</protein>
<organism>
    <name type="scientific">Ciona intestinalis</name>
    <name type="common">Transparent sea squirt</name>
    <name type="synonym">Ascidia intestinalis</name>
    <dbReference type="NCBI Taxonomy" id="7719"/>
    <lineage>
        <taxon>Eukaryota</taxon>
        <taxon>Metazoa</taxon>
        <taxon>Chordata</taxon>
        <taxon>Tunicata</taxon>
        <taxon>Ascidiacea</taxon>
        <taxon>Phlebobranchia</taxon>
        <taxon>Cionidae</taxon>
        <taxon>Ciona</taxon>
    </lineage>
</organism>